<gene>
    <name type="primary">rps4</name>
</gene>
<sequence>MSRYRGPRLKKIRRLGALPGLTRKTPKSGSNQKKKFHSGKKEQYRIRLQEKQKLRFHYGLTERQLLRYVHIAGKAKRSTGQVLLQLLEMRLDNILFRLGMASTIPGARQLVNHRHILVNGRIVDIPSFRCKPRDIITTKDNQRSKRLVQNYIASSDPGKLPKHLTVDTLQYKGLVKKILDRKWVGLKINELLVVEYYSRQT</sequence>
<geneLocation type="chloroplast"/>
<feature type="chain" id="PRO_0000277021" description="Small ribosomal subunit protein uS4c">
    <location>
        <begin position="1"/>
        <end position="201"/>
    </location>
</feature>
<feature type="domain" description="S4 RNA-binding">
    <location>
        <begin position="89"/>
        <end position="150"/>
    </location>
</feature>
<feature type="region of interest" description="Disordered" evidence="2">
    <location>
        <begin position="15"/>
        <end position="43"/>
    </location>
</feature>
<name>RR4_SORBI</name>
<protein>
    <recommendedName>
        <fullName evidence="3">Small ribosomal subunit protein uS4c</fullName>
    </recommendedName>
    <alternativeName>
        <fullName>30S ribosomal protein S4, chloroplastic</fullName>
    </alternativeName>
</protein>
<proteinExistence type="inferred from homology"/>
<evidence type="ECO:0000250" key="1"/>
<evidence type="ECO:0000256" key="2">
    <source>
        <dbReference type="SAM" id="MobiDB-lite"/>
    </source>
</evidence>
<evidence type="ECO:0000305" key="3"/>
<comment type="function">
    <text evidence="1">One of the primary rRNA binding proteins, it binds directly to 16S rRNA where it nucleates assembly of the body of the 30S subunit.</text>
</comment>
<comment type="function">
    <text evidence="1">With S5 and S12 plays an important role in translational accuracy.</text>
</comment>
<comment type="subunit">
    <text evidence="1">Part of the 30S ribosomal subunit. Contacts protein S5. The interaction surface between S4 and S5 is involved in control of translational fidelity (By similarity).</text>
</comment>
<comment type="subcellular location">
    <subcellularLocation>
        <location>Plastid</location>
        <location>Chloroplast</location>
    </subcellularLocation>
</comment>
<comment type="similarity">
    <text evidence="3">Belongs to the universal ribosomal protein uS4 family.</text>
</comment>
<keyword id="KW-0150">Chloroplast</keyword>
<keyword id="KW-0934">Plastid</keyword>
<keyword id="KW-1185">Reference proteome</keyword>
<keyword id="KW-0687">Ribonucleoprotein</keyword>
<keyword id="KW-0689">Ribosomal protein</keyword>
<keyword id="KW-0694">RNA-binding</keyword>
<keyword id="KW-0699">rRNA-binding</keyword>
<accession>A1E9S6</accession>
<dbReference type="EMBL" id="EF115542">
    <property type="protein sequence ID" value="ABK79498.1"/>
    <property type="molecule type" value="Genomic_DNA"/>
</dbReference>
<dbReference type="RefSeq" id="YP_899409.1">
    <property type="nucleotide sequence ID" value="NC_008602.1"/>
</dbReference>
<dbReference type="SMR" id="A1E9S6"/>
<dbReference type="FunCoup" id="A1E9S6">
    <property type="interactions" value="219"/>
</dbReference>
<dbReference type="STRING" id="4558.A1E9S6"/>
<dbReference type="GeneID" id="4549191"/>
<dbReference type="KEGG" id="sbi:4549191"/>
<dbReference type="InParanoid" id="A1E9S6"/>
<dbReference type="OrthoDB" id="726413at2759"/>
<dbReference type="Proteomes" id="UP000000768">
    <property type="component" value="Chloroplast"/>
</dbReference>
<dbReference type="GO" id="GO:0009507">
    <property type="term" value="C:chloroplast"/>
    <property type="evidence" value="ECO:0007669"/>
    <property type="project" value="UniProtKB-SubCell"/>
</dbReference>
<dbReference type="GO" id="GO:0015935">
    <property type="term" value="C:small ribosomal subunit"/>
    <property type="evidence" value="ECO:0000318"/>
    <property type="project" value="GO_Central"/>
</dbReference>
<dbReference type="GO" id="GO:0019843">
    <property type="term" value="F:rRNA binding"/>
    <property type="evidence" value="ECO:0000318"/>
    <property type="project" value="GO_Central"/>
</dbReference>
<dbReference type="GO" id="GO:0003735">
    <property type="term" value="F:structural constituent of ribosome"/>
    <property type="evidence" value="ECO:0000318"/>
    <property type="project" value="GO_Central"/>
</dbReference>
<dbReference type="GO" id="GO:0042274">
    <property type="term" value="P:ribosomal small subunit biogenesis"/>
    <property type="evidence" value="ECO:0000318"/>
    <property type="project" value="GO_Central"/>
</dbReference>
<dbReference type="GO" id="GO:0006412">
    <property type="term" value="P:translation"/>
    <property type="evidence" value="ECO:0007669"/>
    <property type="project" value="UniProtKB-UniRule"/>
</dbReference>
<dbReference type="CDD" id="cd00165">
    <property type="entry name" value="S4"/>
    <property type="match status" value="1"/>
</dbReference>
<dbReference type="FunFam" id="1.10.1050.10:FF:000002">
    <property type="entry name" value="30S ribosomal protein S4, chloroplastic"/>
    <property type="match status" value="1"/>
</dbReference>
<dbReference type="FunFam" id="3.10.290.10:FF:000081">
    <property type="entry name" value="30S ribosomal protein S4, chloroplastic"/>
    <property type="match status" value="1"/>
</dbReference>
<dbReference type="Gene3D" id="1.10.1050.10">
    <property type="entry name" value="Ribosomal Protein S4 Delta 41, Chain A, domain 1"/>
    <property type="match status" value="1"/>
</dbReference>
<dbReference type="Gene3D" id="3.10.290.10">
    <property type="entry name" value="RNA-binding S4 domain"/>
    <property type="match status" value="1"/>
</dbReference>
<dbReference type="HAMAP" id="MF_01306_B">
    <property type="entry name" value="Ribosomal_uS4_B"/>
    <property type="match status" value="1"/>
</dbReference>
<dbReference type="InterPro" id="IPR022801">
    <property type="entry name" value="Ribosomal_uS4"/>
</dbReference>
<dbReference type="InterPro" id="IPR005709">
    <property type="entry name" value="Ribosomal_uS4_bac-type"/>
</dbReference>
<dbReference type="InterPro" id="IPR018079">
    <property type="entry name" value="Ribosomal_uS4_CS"/>
</dbReference>
<dbReference type="InterPro" id="IPR001912">
    <property type="entry name" value="Ribosomal_uS4_N"/>
</dbReference>
<dbReference type="InterPro" id="IPR002942">
    <property type="entry name" value="S4_RNA-bd"/>
</dbReference>
<dbReference type="InterPro" id="IPR036986">
    <property type="entry name" value="S4_RNA-bd_sf"/>
</dbReference>
<dbReference type="NCBIfam" id="NF003717">
    <property type="entry name" value="PRK05327.1"/>
    <property type="match status" value="1"/>
</dbReference>
<dbReference type="NCBIfam" id="TIGR01017">
    <property type="entry name" value="rpsD_bact"/>
    <property type="match status" value="1"/>
</dbReference>
<dbReference type="PANTHER" id="PTHR11831">
    <property type="entry name" value="30S 40S RIBOSOMAL PROTEIN"/>
    <property type="match status" value="1"/>
</dbReference>
<dbReference type="PANTHER" id="PTHR11831:SF4">
    <property type="entry name" value="SMALL RIBOSOMAL SUBUNIT PROTEIN US4M"/>
    <property type="match status" value="1"/>
</dbReference>
<dbReference type="Pfam" id="PF00163">
    <property type="entry name" value="Ribosomal_S4"/>
    <property type="match status" value="1"/>
</dbReference>
<dbReference type="Pfam" id="PF01479">
    <property type="entry name" value="S4"/>
    <property type="match status" value="1"/>
</dbReference>
<dbReference type="SMART" id="SM01390">
    <property type="entry name" value="Ribosomal_S4"/>
    <property type="match status" value="1"/>
</dbReference>
<dbReference type="SMART" id="SM00363">
    <property type="entry name" value="S4"/>
    <property type="match status" value="1"/>
</dbReference>
<dbReference type="SUPFAM" id="SSF55174">
    <property type="entry name" value="Alpha-L RNA-binding motif"/>
    <property type="match status" value="1"/>
</dbReference>
<dbReference type="PROSITE" id="PS00632">
    <property type="entry name" value="RIBOSOMAL_S4"/>
    <property type="match status" value="1"/>
</dbReference>
<dbReference type="PROSITE" id="PS50889">
    <property type="entry name" value="S4"/>
    <property type="match status" value="1"/>
</dbReference>
<organism>
    <name type="scientific">Sorghum bicolor</name>
    <name type="common">Sorghum</name>
    <name type="synonym">Sorghum vulgare</name>
    <dbReference type="NCBI Taxonomy" id="4558"/>
    <lineage>
        <taxon>Eukaryota</taxon>
        <taxon>Viridiplantae</taxon>
        <taxon>Streptophyta</taxon>
        <taxon>Embryophyta</taxon>
        <taxon>Tracheophyta</taxon>
        <taxon>Spermatophyta</taxon>
        <taxon>Magnoliopsida</taxon>
        <taxon>Liliopsida</taxon>
        <taxon>Poales</taxon>
        <taxon>Poaceae</taxon>
        <taxon>PACMAD clade</taxon>
        <taxon>Panicoideae</taxon>
        <taxon>Andropogonodae</taxon>
        <taxon>Andropogoneae</taxon>
        <taxon>Sorghinae</taxon>
        <taxon>Sorghum</taxon>
    </lineage>
</organism>
<reference key="1">
    <citation type="journal article" date="2007" name="Theor. Appl. Genet.">
        <title>Complete chloroplast genome sequences of Hordeum vulgare, Sorghum bicolor and Agrostis stolonifera, and comparative analyses with other grass genomes.</title>
        <authorList>
            <person name="Saski C."/>
            <person name="Lee S.-B."/>
            <person name="Fjellheim S."/>
            <person name="Guda C."/>
            <person name="Jansen R.K."/>
            <person name="Luo H."/>
            <person name="Tomkins J."/>
            <person name="Rognli O.A."/>
            <person name="Daniell H."/>
            <person name="Clarke J.L."/>
        </authorList>
    </citation>
    <scope>NUCLEOTIDE SEQUENCE [LARGE SCALE GENOMIC DNA]</scope>
    <source>
        <strain>cv. BTx623</strain>
    </source>
</reference>